<proteinExistence type="predicted"/>
<keyword id="KW-1029">Fimbrium biogenesis</keyword>
<protein>
    <recommendedName>
        <fullName>Fimbrial assembly protein, serogroup F1</fullName>
    </recommendedName>
</protein>
<sequence>MNKQRFLFAAKISGIHFLLSLTVAVLLAGLIFFVWYPFPYQKIMGNFK</sequence>
<reference key="1">
    <citation type="journal article" date="1991" name="Mol. Microbiol.">
        <title>Organization of the fimbrial gene region of Bacteroides nodosus: class I and class II strains.</title>
        <authorList>
            <person name="Hobbs M."/>
            <person name="Dalrymple B.P."/>
            <person name="Cox P.T."/>
            <person name="Livingstone S.P."/>
            <person name="Delaney S.F."/>
            <person name="Mattick J.S."/>
        </authorList>
    </citation>
    <scope>NUCLEOTIDE SEQUENCE [GENOMIC DNA]</scope>
    <source>
        <strain>Serogroup F1 isolate VCS1017</strain>
    </source>
</reference>
<accession>P17832</accession>
<organism>
    <name type="scientific">Dichelobacter nodosus</name>
    <name type="common">Bacteroides nodosus</name>
    <dbReference type="NCBI Taxonomy" id="870"/>
    <lineage>
        <taxon>Bacteria</taxon>
        <taxon>Pseudomonadati</taxon>
        <taxon>Pseudomonadota</taxon>
        <taxon>Gammaproteobacteria</taxon>
        <taxon>Cardiobacteriales</taxon>
        <taxon>Cardiobacteriaceae</taxon>
        <taxon>Dichelobacter</taxon>
    </lineage>
</organism>
<dbReference type="EMBL" id="X52408">
    <property type="protein sequence ID" value="CAA36659.1"/>
    <property type="molecule type" value="Genomic_DNA"/>
</dbReference>
<dbReference type="PIR" id="S15245">
    <property type="entry name" value="S15245"/>
</dbReference>
<dbReference type="SMR" id="P17832"/>
<gene>
    <name type="primary">fimB</name>
</gene>
<name>FIMBF_DICNO</name>
<feature type="chain" id="PRO_0000087247" description="Fimbrial assembly protein, serogroup F1">
    <location>
        <begin position="1"/>
        <end position="48" status="greater than"/>
    </location>
</feature>
<feature type="non-terminal residue">
    <location>
        <position position="48"/>
    </location>
</feature>